<proteinExistence type="inferred from homology"/>
<evidence type="ECO:0000255" key="1">
    <source>
        <dbReference type="HAMAP-Rule" id="MF_01006"/>
    </source>
</evidence>
<name>UPPP_STRS2</name>
<accession>A4W3V2</accession>
<comment type="function">
    <text evidence="1">Catalyzes the dephosphorylation of undecaprenyl diphosphate (UPP). Confers resistance to bacitracin.</text>
</comment>
<comment type="catalytic activity">
    <reaction evidence="1">
        <text>di-trans,octa-cis-undecaprenyl diphosphate + H2O = di-trans,octa-cis-undecaprenyl phosphate + phosphate + H(+)</text>
        <dbReference type="Rhea" id="RHEA:28094"/>
        <dbReference type="ChEBI" id="CHEBI:15377"/>
        <dbReference type="ChEBI" id="CHEBI:15378"/>
        <dbReference type="ChEBI" id="CHEBI:43474"/>
        <dbReference type="ChEBI" id="CHEBI:58405"/>
        <dbReference type="ChEBI" id="CHEBI:60392"/>
        <dbReference type="EC" id="3.6.1.27"/>
    </reaction>
</comment>
<comment type="subcellular location">
    <subcellularLocation>
        <location evidence="1">Cell membrane</location>
        <topology evidence="1">Multi-pass membrane protein</topology>
    </subcellularLocation>
</comment>
<comment type="miscellaneous">
    <text>Bacitracin is thought to be involved in the inhibition of peptidoglycan synthesis by sequestering undecaprenyl diphosphate, thereby reducing the pool of lipid carrier available.</text>
</comment>
<comment type="similarity">
    <text evidence="1">Belongs to the UppP family.</text>
</comment>
<gene>
    <name evidence="1" type="primary">uppP</name>
    <name type="ordered locus">SSU98_1883</name>
</gene>
<reference key="1">
    <citation type="journal article" date="2007" name="PLoS ONE">
        <title>A glimpse of streptococcal toxic shock syndrome from comparative genomics of S. suis 2 Chinese isolates.</title>
        <authorList>
            <person name="Chen C."/>
            <person name="Tang J."/>
            <person name="Dong W."/>
            <person name="Wang C."/>
            <person name="Feng Y."/>
            <person name="Wang J."/>
            <person name="Zheng F."/>
            <person name="Pan X."/>
            <person name="Liu D."/>
            <person name="Li M."/>
            <person name="Song Y."/>
            <person name="Zhu X."/>
            <person name="Sun H."/>
            <person name="Feng T."/>
            <person name="Guo Z."/>
            <person name="Ju A."/>
            <person name="Ge J."/>
            <person name="Dong Y."/>
            <person name="Sun W."/>
            <person name="Jiang Y."/>
            <person name="Wang J."/>
            <person name="Yan J."/>
            <person name="Yang H."/>
            <person name="Wang X."/>
            <person name="Gao G.F."/>
            <person name="Yang R."/>
            <person name="Wang J."/>
            <person name="Yu J."/>
        </authorList>
    </citation>
    <scope>NUCLEOTIDE SEQUENCE [LARGE SCALE GENOMIC DNA]</scope>
    <source>
        <strain>98HAH33</strain>
    </source>
</reference>
<keyword id="KW-0046">Antibiotic resistance</keyword>
<keyword id="KW-1003">Cell membrane</keyword>
<keyword id="KW-0133">Cell shape</keyword>
<keyword id="KW-0961">Cell wall biogenesis/degradation</keyword>
<keyword id="KW-0378">Hydrolase</keyword>
<keyword id="KW-0472">Membrane</keyword>
<keyword id="KW-0573">Peptidoglycan synthesis</keyword>
<keyword id="KW-0812">Transmembrane</keyword>
<keyword id="KW-1133">Transmembrane helix</keyword>
<sequence length="278" mass="31191">MLLELLKAIFLGIIEGVTEWLPVSSTGHLILVQEFVKLNQSKNFLEMFNIVIQLGAILAVMTIYFKKLNPFQPGKTKRDIQLTWQLWAKVVIACIPSILIAVPLDNWFEAHFNFMVPIAIALIVYGIAFIWIENRNRGIEPQVTDLAKMSYKTALLIGCFQVLSIVPGTSRSGATILGAIILGTSRSVAADFTFFLGIPTMFGYSGLKAVKYFLDGNSLNMEQVWILLVASVTAYLVSLVVIRFLTDFVKKHDFTVFGYYRIILGAILLVYAFITFLF</sequence>
<organism>
    <name type="scientific">Streptococcus suis (strain 98HAH33)</name>
    <dbReference type="NCBI Taxonomy" id="391296"/>
    <lineage>
        <taxon>Bacteria</taxon>
        <taxon>Bacillati</taxon>
        <taxon>Bacillota</taxon>
        <taxon>Bacilli</taxon>
        <taxon>Lactobacillales</taxon>
        <taxon>Streptococcaceae</taxon>
        <taxon>Streptococcus</taxon>
    </lineage>
</organism>
<feature type="chain" id="PRO_0000303036" description="Undecaprenyl-diphosphatase">
    <location>
        <begin position="1"/>
        <end position="278"/>
    </location>
</feature>
<feature type="transmembrane region" description="Helical" evidence="1">
    <location>
        <begin position="44"/>
        <end position="64"/>
    </location>
</feature>
<feature type="transmembrane region" description="Helical" evidence="1">
    <location>
        <begin position="84"/>
        <end position="104"/>
    </location>
</feature>
<feature type="transmembrane region" description="Helical" evidence="1">
    <location>
        <begin position="112"/>
        <end position="132"/>
    </location>
</feature>
<feature type="transmembrane region" description="Helical" evidence="1">
    <location>
        <begin position="187"/>
        <end position="207"/>
    </location>
</feature>
<feature type="transmembrane region" description="Helical" evidence="1">
    <location>
        <begin position="224"/>
        <end position="244"/>
    </location>
</feature>
<feature type="transmembrane region" description="Helical" evidence="1">
    <location>
        <begin position="254"/>
        <end position="274"/>
    </location>
</feature>
<protein>
    <recommendedName>
        <fullName evidence="1">Undecaprenyl-diphosphatase</fullName>
        <ecNumber evidence="1">3.6.1.27</ecNumber>
    </recommendedName>
    <alternativeName>
        <fullName evidence="1">Bacitracin resistance protein</fullName>
    </alternativeName>
    <alternativeName>
        <fullName evidence="1">Undecaprenyl pyrophosphate phosphatase</fullName>
    </alternativeName>
</protein>
<dbReference type="EC" id="3.6.1.27" evidence="1"/>
<dbReference type="EMBL" id="CP000408">
    <property type="protein sequence ID" value="ABP93041.1"/>
    <property type="molecule type" value="Genomic_DNA"/>
</dbReference>
<dbReference type="SMR" id="A4W3V2"/>
<dbReference type="KEGG" id="ssv:SSU98_1883"/>
<dbReference type="HOGENOM" id="CLU_060296_2_0_9"/>
<dbReference type="GO" id="GO:0005886">
    <property type="term" value="C:plasma membrane"/>
    <property type="evidence" value="ECO:0007669"/>
    <property type="project" value="UniProtKB-SubCell"/>
</dbReference>
<dbReference type="GO" id="GO:0050380">
    <property type="term" value="F:undecaprenyl-diphosphatase activity"/>
    <property type="evidence" value="ECO:0007669"/>
    <property type="project" value="UniProtKB-UniRule"/>
</dbReference>
<dbReference type="GO" id="GO:0071555">
    <property type="term" value="P:cell wall organization"/>
    <property type="evidence" value="ECO:0007669"/>
    <property type="project" value="UniProtKB-KW"/>
</dbReference>
<dbReference type="GO" id="GO:0009252">
    <property type="term" value="P:peptidoglycan biosynthetic process"/>
    <property type="evidence" value="ECO:0007669"/>
    <property type="project" value="UniProtKB-KW"/>
</dbReference>
<dbReference type="GO" id="GO:0008360">
    <property type="term" value="P:regulation of cell shape"/>
    <property type="evidence" value="ECO:0007669"/>
    <property type="project" value="UniProtKB-KW"/>
</dbReference>
<dbReference type="GO" id="GO:0046677">
    <property type="term" value="P:response to antibiotic"/>
    <property type="evidence" value="ECO:0007669"/>
    <property type="project" value="UniProtKB-UniRule"/>
</dbReference>
<dbReference type="HAMAP" id="MF_01006">
    <property type="entry name" value="Undec_diphosphatase"/>
    <property type="match status" value="1"/>
</dbReference>
<dbReference type="InterPro" id="IPR003824">
    <property type="entry name" value="UppP"/>
</dbReference>
<dbReference type="NCBIfam" id="NF001390">
    <property type="entry name" value="PRK00281.1-4"/>
    <property type="match status" value="1"/>
</dbReference>
<dbReference type="NCBIfam" id="NF001391">
    <property type="entry name" value="PRK00281.1-5"/>
    <property type="match status" value="1"/>
</dbReference>
<dbReference type="PANTHER" id="PTHR30622">
    <property type="entry name" value="UNDECAPRENYL-DIPHOSPHATASE"/>
    <property type="match status" value="1"/>
</dbReference>
<dbReference type="PANTHER" id="PTHR30622:SF3">
    <property type="entry name" value="UNDECAPRENYL-DIPHOSPHATASE"/>
    <property type="match status" value="1"/>
</dbReference>
<dbReference type="Pfam" id="PF02673">
    <property type="entry name" value="BacA"/>
    <property type="match status" value="1"/>
</dbReference>